<comment type="function">
    <text evidence="1">Mediates zinc uptake. May also transport other divalent cations.</text>
</comment>
<comment type="catalytic activity">
    <reaction evidence="1">
        <text>Zn(2+)(in) = Zn(2+)(out)</text>
        <dbReference type="Rhea" id="RHEA:29351"/>
        <dbReference type="ChEBI" id="CHEBI:29105"/>
    </reaction>
</comment>
<comment type="subcellular location">
    <subcellularLocation>
        <location evidence="1">Cell inner membrane</location>
        <topology evidence="1">Multi-pass membrane protein</topology>
    </subcellularLocation>
</comment>
<comment type="similarity">
    <text evidence="1">Belongs to the ZIP transporter (TC 2.A.5) family. ZupT subfamily.</text>
</comment>
<gene>
    <name evidence="1" type="primary">zupT</name>
    <name type="ordered locus">ECDH10B_3214</name>
</gene>
<sequence length="257" mass="26485">MSVPLILTILAGAATFIGAFLGVLGQKPSNRLLAFSLGFAAGIMLLISLMEMLPAALAAEGMSPVLGYGMFIFGLLGYFGLDRMLPHAHPQDLMQKSVQPLPKSIKRTAILLTLGISLHNFPEGIATFVTASSNLELGFGIALAVALHNIPEGLAVAGPVYAATGSKRTAILWAGISGLAEILGGVLAWLILGSMISPVVMAAIMAAVAGIMVALSVDELMPLAKEIDPNNNPSYGVLCGMSVMGFSLVLLQTAGIG</sequence>
<proteinExistence type="inferred from homology"/>
<dbReference type="EMBL" id="CP000948">
    <property type="protein sequence ID" value="ACB04125.1"/>
    <property type="molecule type" value="Genomic_DNA"/>
</dbReference>
<dbReference type="RefSeq" id="WP_001295627.1">
    <property type="nucleotide sequence ID" value="NC_010473.1"/>
</dbReference>
<dbReference type="SMR" id="B1XG45"/>
<dbReference type="GeneID" id="93778954"/>
<dbReference type="KEGG" id="ecd:ECDH10B_3214"/>
<dbReference type="HOGENOM" id="CLU_015114_1_3_6"/>
<dbReference type="GO" id="GO:0005886">
    <property type="term" value="C:plasma membrane"/>
    <property type="evidence" value="ECO:0007669"/>
    <property type="project" value="UniProtKB-SubCell"/>
</dbReference>
<dbReference type="GO" id="GO:0046872">
    <property type="term" value="F:metal ion binding"/>
    <property type="evidence" value="ECO:0007669"/>
    <property type="project" value="UniProtKB-KW"/>
</dbReference>
<dbReference type="GO" id="GO:0005385">
    <property type="term" value="F:zinc ion transmembrane transporter activity"/>
    <property type="evidence" value="ECO:0007669"/>
    <property type="project" value="UniProtKB-UniRule"/>
</dbReference>
<dbReference type="HAMAP" id="MF_00548">
    <property type="entry name" value="ZupT"/>
    <property type="match status" value="1"/>
</dbReference>
<dbReference type="InterPro" id="IPR003689">
    <property type="entry name" value="ZIP"/>
</dbReference>
<dbReference type="InterPro" id="IPR023498">
    <property type="entry name" value="Zn_transptr_ZupT"/>
</dbReference>
<dbReference type="NCBIfam" id="NF003243">
    <property type="entry name" value="PRK04201.1"/>
    <property type="match status" value="1"/>
</dbReference>
<dbReference type="PANTHER" id="PTHR11040:SF205">
    <property type="entry name" value="ZINC TRANSPORTER ZUPT"/>
    <property type="match status" value="1"/>
</dbReference>
<dbReference type="PANTHER" id="PTHR11040">
    <property type="entry name" value="ZINC/IRON TRANSPORTER"/>
    <property type="match status" value="1"/>
</dbReference>
<dbReference type="Pfam" id="PF02535">
    <property type="entry name" value="Zip"/>
    <property type="match status" value="2"/>
</dbReference>
<name>ZUPT_ECODH</name>
<organism>
    <name type="scientific">Escherichia coli (strain K12 / DH10B)</name>
    <dbReference type="NCBI Taxonomy" id="316385"/>
    <lineage>
        <taxon>Bacteria</taxon>
        <taxon>Pseudomonadati</taxon>
        <taxon>Pseudomonadota</taxon>
        <taxon>Gammaproteobacteria</taxon>
        <taxon>Enterobacterales</taxon>
        <taxon>Enterobacteriaceae</taxon>
        <taxon>Escherichia</taxon>
    </lineage>
</organism>
<reference key="1">
    <citation type="journal article" date="2008" name="J. Bacteriol.">
        <title>The complete genome sequence of Escherichia coli DH10B: insights into the biology of a laboratory workhorse.</title>
        <authorList>
            <person name="Durfee T."/>
            <person name="Nelson R."/>
            <person name="Baldwin S."/>
            <person name="Plunkett G. III"/>
            <person name="Burland V."/>
            <person name="Mau B."/>
            <person name="Petrosino J.F."/>
            <person name="Qin X."/>
            <person name="Muzny D.M."/>
            <person name="Ayele M."/>
            <person name="Gibbs R.A."/>
            <person name="Csorgo B."/>
            <person name="Posfai G."/>
            <person name="Weinstock G.M."/>
            <person name="Blattner F.R."/>
        </authorList>
    </citation>
    <scope>NUCLEOTIDE SEQUENCE [LARGE SCALE GENOMIC DNA]</scope>
    <source>
        <strain>K12 / DH10B</strain>
    </source>
</reference>
<evidence type="ECO:0000255" key="1">
    <source>
        <dbReference type="HAMAP-Rule" id="MF_00548"/>
    </source>
</evidence>
<accession>B1XG45</accession>
<feature type="chain" id="PRO_1000128952" description="Zinc transporter ZupT">
    <location>
        <begin position="1"/>
        <end position="257"/>
    </location>
</feature>
<feature type="transmembrane region" description="Helical" evidence="1">
    <location>
        <begin position="5"/>
        <end position="25"/>
    </location>
</feature>
<feature type="transmembrane region" description="Helical" evidence="1">
    <location>
        <begin position="32"/>
        <end position="52"/>
    </location>
</feature>
<feature type="transmembrane region" description="Helical" evidence="1">
    <location>
        <begin position="61"/>
        <end position="81"/>
    </location>
</feature>
<feature type="transmembrane region" description="Helical" evidence="1">
    <location>
        <begin position="137"/>
        <end position="157"/>
    </location>
</feature>
<feature type="transmembrane region" description="Helical" evidence="1">
    <location>
        <begin position="171"/>
        <end position="191"/>
    </location>
</feature>
<feature type="transmembrane region" description="Helical" evidence="1">
    <location>
        <begin position="195"/>
        <end position="215"/>
    </location>
</feature>
<feature type="transmembrane region" description="Helical" evidence="1">
    <location>
        <begin position="236"/>
        <end position="256"/>
    </location>
</feature>
<feature type="binding site" description="M2 metal binding site" evidence="1">
    <location>
        <position position="120"/>
    </location>
    <ligand>
        <name>Fe(2+)</name>
        <dbReference type="ChEBI" id="CHEBI:29033"/>
    </ligand>
</feature>
<feature type="binding site" description="M2 metal binding site" evidence="1">
    <location>
        <position position="123"/>
    </location>
    <ligand>
        <name>Fe(2+)</name>
        <dbReference type="ChEBI" id="CHEBI:29033"/>
    </ligand>
</feature>
<feature type="binding site" description="M1 metal binding site" evidence="1">
    <location>
        <position position="123"/>
    </location>
    <ligand>
        <name>Zn(2+)</name>
        <dbReference type="ChEBI" id="CHEBI:29105"/>
    </ligand>
</feature>
<feature type="binding site" description="M1 metal binding site" evidence="1">
    <location>
        <position position="148"/>
    </location>
    <ligand>
        <name>Zn(2+)</name>
        <dbReference type="ChEBI" id="CHEBI:29105"/>
    </ligand>
</feature>
<feature type="binding site" description="M2 metal binding site" evidence="1">
    <location>
        <position position="149"/>
    </location>
    <ligand>
        <name>Fe(2+)</name>
        <dbReference type="ChEBI" id="CHEBI:29033"/>
    </ligand>
</feature>
<feature type="binding site" description="M2 metal binding site" evidence="1">
    <location>
        <position position="152"/>
    </location>
    <ligand>
        <name>Fe(2+)</name>
        <dbReference type="ChEBI" id="CHEBI:29033"/>
    </ligand>
</feature>
<feature type="binding site" description="M1 metal binding site" evidence="1">
    <location>
        <position position="152"/>
    </location>
    <ligand>
        <name>Zn(2+)</name>
        <dbReference type="ChEBI" id="CHEBI:29105"/>
    </ligand>
</feature>
<feature type="binding site" description="M2 metal binding site" evidence="1">
    <location>
        <position position="181"/>
    </location>
    <ligand>
        <name>Fe(2+)</name>
        <dbReference type="ChEBI" id="CHEBI:29033"/>
    </ligand>
</feature>
<keyword id="KW-0997">Cell inner membrane</keyword>
<keyword id="KW-1003">Cell membrane</keyword>
<keyword id="KW-0406">Ion transport</keyword>
<keyword id="KW-0408">Iron</keyword>
<keyword id="KW-0472">Membrane</keyword>
<keyword id="KW-0479">Metal-binding</keyword>
<keyword id="KW-0812">Transmembrane</keyword>
<keyword id="KW-1133">Transmembrane helix</keyword>
<keyword id="KW-0813">Transport</keyword>
<keyword id="KW-0862">Zinc</keyword>
<keyword id="KW-0864">Zinc transport</keyword>
<protein>
    <recommendedName>
        <fullName evidence="1">Zinc transporter ZupT</fullName>
    </recommendedName>
</protein>